<keyword id="KW-0030">Aminoacyl-tRNA synthetase</keyword>
<keyword id="KW-0067">ATP-binding</keyword>
<keyword id="KW-0963">Cytoplasm</keyword>
<keyword id="KW-0436">Ligase</keyword>
<keyword id="KW-0479">Metal-binding</keyword>
<keyword id="KW-0547">Nucleotide-binding</keyword>
<keyword id="KW-0648">Protein biosynthesis</keyword>
<keyword id="KW-0862">Zinc</keyword>
<sequence length="935" mass="106972">MSDYKDTLNLPKTSFSMKGNLANKEPMILNKWEKQGIYKKIREHFAGREKFVLHDGPPYANGSIHVGHAVNKILKDIIIKSKTLSGYDAPFTPTWDCHGLPIELQVEKKHGKAGQSISEDDFRKECRKYAKKQVEIQKKDFKRLGVLGDWEQPYLTMNFDYEANMIRTLAKIIENGHLSKGFKPVHWCTDCGSALAEAEVEYADKVSPAIDVKFKIKDKDKLAQAFGLDSLNHDAFAIIWTTTPWTLPANQAIAVNNQLNYSLIKIEDFYIILAENLVEQTLKRYAIENAQIIATTTGNKLTGIIAEHPFYSRHVPILHGDHVTDDSGTGLVHTAPTHGVDDFTLGKEHNLSMEIFVKGNGCYSENTKLFAGEFIFKASDRIIELLGEKKRLMNSDKIKHSYPHCWRHKTPLMFRATPQWFISMEKQGLRDKALQTIKETSWAPSWGQARIEGMVKDRPDWCISRQRTWGVPLPLFIHKETEELHPNTIEILHKVAEKIEKDGIEAWFNADDCEFITETAQYKSVKDTLDVWFDSGSSSMCILDLDKRLSYPADLYLEGSDQHRGWFQTSLLVAMSAKGSQPYKEVFTHGFVVDEHGRKMSKSLGNVTSPQDIYNTLGADILRLWTASTDYKSEMAVSDQILKRTADTYRRLRNTARFLLSNLDGFNPVTDIIEFDKLVKLDQWAIAKTKEFQDKIIEAYDKYQTHTVAQLIHHFCSIEMGSFYLDIIKDRQYTAKTDGHPRKSAQTAIYHIVHALVRWMAPILSFTADEIWDATPKTTDLPIQLCEWYTGLKSFDQDAELDLEYWAKIQEIRSEVNRVLEIKRNEDVIKASLEAEITIYADKYNYKLLEKLGNELRFLLISSKADLKVIEESTSSSIAANILGLLIEITKIEEPKCERCWHRSSTVGDNPQYKDICSRCVENITTEAGESREFA</sequence>
<organism>
    <name type="scientific">Francisella tularensis subsp. holarctica (strain OSU18)</name>
    <dbReference type="NCBI Taxonomy" id="393011"/>
    <lineage>
        <taxon>Bacteria</taxon>
        <taxon>Pseudomonadati</taxon>
        <taxon>Pseudomonadota</taxon>
        <taxon>Gammaproteobacteria</taxon>
        <taxon>Thiotrichales</taxon>
        <taxon>Francisellaceae</taxon>
        <taxon>Francisella</taxon>
    </lineage>
</organism>
<proteinExistence type="inferred from homology"/>
<reference key="1">
    <citation type="journal article" date="2006" name="J. Bacteriol.">
        <title>Chromosome rearrangement and diversification of Francisella tularensis revealed by the type B (OSU18) genome sequence.</title>
        <authorList>
            <person name="Petrosino J.F."/>
            <person name="Xiang Q."/>
            <person name="Karpathy S.E."/>
            <person name="Jiang H."/>
            <person name="Yerrapragada S."/>
            <person name="Liu Y."/>
            <person name="Gioia J."/>
            <person name="Hemphill L."/>
            <person name="Gonzalez A."/>
            <person name="Raghavan T.M."/>
            <person name="Uzman A."/>
            <person name="Fox G.E."/>
            <person name="Highlander S."/>
            <person name="Reichard M."/>
            <person name="Morton R.J."/>
            <person name="Clinkenbeard K.D."/>
            <person name="Weinstock G.M."/>
        </authorList>
    </citation>
    <scope>NUCLEOTIDE SEQUENCE [LARGE SCALE GENOMIC DNA]</scope>
    <source>
        <strain>OSU18</strain>
    </source>
</reference>
<evidence type="ECO:0000255" key="1">
    <source>
        <dbReference type="HAMAP-Rule" id="MF_02002"/>
    </source>
</evidence>
<gene>
    <name evidence="1" type="primary">ileS</name>
    <name type="ordered locus">FTH_0428</name>
</gene>
<dbReference type="EC" id="6.1.1.5" evidence="1"/>
<dbReference type="EMBL" id="CP000437">
    <property type="protein sequence ID" value="ABI82419.1"/>
    <property type="molecule type" value="Genomic_DNA"/>
</dbReference>
<dbReference type="RefSeq" id="WP_011457376.1">
    <property type="nucleotide sequence ID" value="NC_017463.1"/>
</dbReference>
<dbReference type="SMR" id="Q0BNB5"/>
<dbReference type="KEGG" id="fth:FTH_0428"/>
<dbReference type="GO" id="GO:0005829">
    <property type="term" value="C:cytosol"/>
    <property type="evidence" value="ECO:0007669"/>
    <property type="project" value="TreeGrafter"/>
</dbReference>
<dbReference type="GO" id="GO:0002161">
    <property type="term" value="F:aminoacyl-tRNA deacylase activity"/>
    <property type="evidence" value="ECO:0007669"/>
    <property type="project" value="InterPro"/>
</dbReference>
<dbReference type="GO" id="GO:0005524">
    <property type="term" value="F:ATP binding"/>
    <property type="evidence" value="ECO:0007669"/>
    <property type="project" value="UniProtKB-UniRule"/>
</dbReference>
<dbReference type="GO" id="GO:0004822">
    <property type="term" value="F:isoleucine-tRNA ligase activity"/>
    <property type="evidence" value="ECO:0007669"/>
    <property type="project" value="UniProtKB-UniRule"/>
</dbReference>
<dbReference type="GO" id="GO:0000049">
    <property type="term" value="F:tRNA binding"/>
    <property type="evidence" value="ECO:0007669"/>
    <property type="project" value="InterPro"/>
</dbReference>
<dbReference type="GO" id="GO:0008270">
    <property type="term" value="F:zinc ion binding"/>
    <property type="evidence" value="ECO:0007669"/>
    <property type="project" value="UniProtKB-UniRule"/>
</dbReference>
<dbReference type="GO" id="GO:0006428">
    <property type="term" value="P:isoleucyl-tRNA aminoacylation"/>
    <property type="evidence" value="ECO:0007669"/>
    <property type="project" value="UniProtKB-UniRule"/>
</dbReference>
<dbReference type="CDD" id="cd07960">
    <property type="entry name" value="Anticodon_Ia_Ile_BEm"/>
    <property type="match status" value="1"/>
</dbReference>
<dbReference type="CDD" id="cd00818">
    <property type="entry name" value="IleRS_core"/>
    <property type="match status" value="1"/>
</dbReference>
<dbReference type="FunFam" id="1.10.730.20:FF:000001">
    <property type="entry name" value="Isoleucine--tRNA ligase"/>
    <property type="match status" value="1"/>
</dbReference>
<dbReference type="FunFam" id="3.40.50.620:FF:000042">
    <property type="entry name" value="Isoleucine--tRNA ligase"/>
    <property type="match status" value="1"/>
</dbReference>
<dbReference type="FunFam" id="3.40.50.620:FF:000048">
    <property type="entry name" value="Isoleucine--tRNA ligase"/>
    <property type="match status" value="1"/>
</dbReference>
<dbReference type="Gene3D" id="1.10.730.20">
    <property type="match status" value="1"/>
</dbReference>
<dbReference type="Gene3D" id="3.40.50.620">
    <property type="entry name" value="HUPs"/>
    <property type="match status" value="2"/>
</dbReference>
<dbReference type="Gene3D" id="3.90.740.10">
    <property type="entry name" value="Valyl/Leucyl/Isoleucyl-tRNA synthetase, editing domain"/>
    <property type="match status" value="1"/>
</dbReference>
<dbReference type="HAMAP" id="MF_02002">
    <property type="entry name" value="Ile_tRNA_synth_type1"/>
    <property type="match status" value="1"/>
</dbReference>
<dbReference type="InterPro" id="IPR001412">
    <property type="entry name" value="aa-tRNA-synth_I_CS"/>
</dbReference>
<dbReference type="InterPro" id="IPR002300">
    <property type="entry name" value="aa-tRNA-synth_Ia"/>
</dbReference>
<dbReference type="InterPro" id="IPR033708">
    <property type="entry name" value="Anticodon_Ile_BEm"/>
</dbReference>
<dbReference type="InterPro" id="IPR002301">
    <property type="entry name" value="Ile-tRNA-ligase"/>
</dbReference>
<dbReference type="InterPro" id="IPR023585">
    <property type="entry name" value="Ile-tRNA-ligase_type1"/>
</dbReference>
<dbReference type="InterPro" id="IPR050081">
    <property type="entry name" value="Ile-tRNA_ligase"/>
</dbReference>
<dbReference type="InterPro" id="IPR013155">
    <property type="entry name" value="M/V/L/I-tRNA-synth_anticd-bd"/>
</dbReference>
<dbReference type="InterPro" id="IPR014729">
    <property type="entry name" value="Rossmann-like_a/b/a_fold"/>
</dbReference>
<dbReference type="InterPro" id="IPR009080">
    <property type="entry name" value="tRNAsynth_Ia_anticodon-bd"/>
</dbReference>
<dbReference type="InterPro" id="IPR009008">
    <property type="entry name" value="Val/Leu/Ile-tRNA-synth_edit"/>
</dbReference>
<dbReference type="InterPro" id="IPR010663">
    <property type="entry name" value="Znf_FPG/IleRS"/>
</dbReference>
<dbReference type="NCBIfam" id="TIGR00392">
    <property type="entry name" value="ileS"/>
    <property type="match status" value="1"/>
</dbReference>
<dbReference type="PANTHER" id="PTHR42765:SF1">
    <property type="entry name" value="ISOLEUCINE--TRNA LIGASE, MITOCHONDRIAL"/>
    <property type="match status" value="1"/>
</dbReference>
<dbReference type="PANTHER" id="PTHR42765">
    <property type="entry name" value="SOLEUCYL-TRNA SYNTHETASE"/>
    <property type="match status" value="1"/>
</dbReference>
<dbReference type="Pfam" id="PF08264">
    <property type="entry name" value="Anticodon_1"/>
    <property type="match status" value="1"/>
</dbReference>
<dbReference type="Pfam" id="PF00133">
    <property type="entry name" value="tRNA-synt_1"/>
    <property type="match status" value="1"/>
</dbReference>
<dbReference type="Pfam" id="PF06827">
    <property type="entry name" value="zf-FPG_IleRS"/>
    <property type="match status" value="1"/>
</dbReference>
<dbReference type="PRINTS" id="PR00984">
    <property type="entry name" value="TRNASYNTHILE"/>
</dbReference>
<dbReference type="SUPFAM" id="SSF47323">
    <property type="entry name" value="Anticodon-binding domain of a subclass of class I aminoacyl-tRNA synthetases"/>
    <property type="match status" value="1"/>
</dbReference>
<dbReference type="SUPFAM" id="SSF52374">
    <property type="entry name" value="Nucleotidylyl transferase"/>
    <property type="match status" value="1"/>
</dbReference>
<dbReference type="SUPFAM" id="SSF50677">
    <property type="entry name" value="ValRS/IleRS/LeuRS editing domain"/>
    <property type="match status" value="1"/>
</dbReference>
<dbReference type="PROSITE" id="PS00178">
    <property type="entry name" value="AA_TRNA_LIGASE_I"/>
    <property type="match status" value="1"/>
</dbReference>
<comment type="function">
    <text evidence="1">Catalyzes the attachment of isoleucine to tRNA(Ile). As IleRS can inadvertently accommodate and process structurally similar amino acids such as valine, to avoid such errors it has two additional distinct tRNA(Ile)-dependent editing activities. One activity is designated as 'pretransfer' editing and involves the hydrolysis of activated Val-AMP. The other activity is designated 'posttransfer' editing and involves deacylation of mischarged Val-tRNA(Ile).</text>
</comment>
<comment type="catalytic activity">
    <reaction evidence="1">
        <text>tRNA(Ile) + L-isoleucine + ATP = L-isoleucyl-tRNA(Ile) + AMP + diphosphate</text>
        <dbReference type="Rhea" id="RHEA:11060"/>
        <dbReference type="Rhea" id="RHEA-COMP:9666"/>
        <dbReference type="Rhea" id="RHEA-COMP:9695"/>
        <dbReference type="ChEBI" id="CHEBI:30616"/>
        <dbReference type="ChEBI" id="CHEBI:33019"/>
        <dbReference type="ChEBI" id="CHEBI:58045"/>
        <dbReference type="ChEBI" id="CHEBI:78442"/>
        <dbReference type="ChEBI" id="CHEBI:78528"/>
        <dbReference type="ChEBI" id="CHEBI:456215"/>
        <dbReference type="EC" id="6.1.1.5"/>
    </reaction>
</comment>
<comment type="cofactor">
    <cofactor evidence="1">
        <name>Zn(2+)</name>
        <dbReference type="ChEBI" id="CHEBI:29105"/>
    </cofactor>
    <text evidence="1">Binds 1 zinc ion per subunit.</text>
</comment>
<comment type="subunit">
    <text evidence="1">Monomer.</text>
</comment>
<comment type="subcellular location">
    <subcellularLocation>
        <location evidence="1">Cytoplasm</location>
    </subcellularLocation>
</comment>
<comment type="domain">
    <text evidence="1">IleRS has two distinct active sites: one for aminoacylation and one for editing. The misactivated valine is translocated from the active site to the editing site, which sterically excludes the correctly activated isoleucine. The single editing site contains two valyl binding pockets, one specific for each substrate (Val-AMP or Val-tRNA(Ile)).</text>
</comment>
<comment type="similarity">
    <text evidence="1">Belongs to the class-I aminoacyl-tRNA synthetase family. IleS type 1 subfamily.</text>
</comment>
<protein>
    <recommendedName>
        <fullName evidence="1">Isoleucine--tRNA ligase</fullName>
        <ecNumber evidence="1">6.1.1.5</ecNumber>
    </recommendedName>
    <alternativeName>
        <fullName evidence="1">Isoleucyl-tRNA synthetase</fullName>
        <shortName evidence="1">IleRS</shortName>
    </alternativeName>
</protein>
<accession>Q0BNB5</accession>
<feature type="chain" id="PRO_1000022069" description="Isoleucine--tRNA ligase">
    <location>
        <begin position="1"/>
        <end position="935"/>
    </location>
</feature>
<feature type="short sequence motif" description="'HIGH' region">
    <location>
        <begin position="58"/>
        <end position="68"/>
    </location>
</feature>
<feature type="short sequence motif" description="'KMSKS' region">
    <location>
        <begin position="599"/>
        <end position="603"/>
    </location>
</feature>
<feature type="binding site" evidence="1">
    <location>
        <position position="558"/>
    </location>
    <ligand>
        <name>L-isoleucyl-5'-AMP</name>
        <dbReference type="ChEBI" id="CHEBI:178002"/>
    </ligand>
</feature>
<feature type="binding site" evidence="1">
    <location>
        <position position="602"/>
    </location>
    <ligand>
        <name>ATP</name>
        <dbReference type="ChEBI" id="CHEBI:30616"/>
    </ligand>
</feature>
<feature type="binding site" evidence="1">
    <location>
        <position position="897"/>
    </location>
    <ligand>
        <name>Zn(2+)</name>
        <dbReference type="ChEBI" id="CHEBI:29105"/>
    </ligand>
</feature>
<feature type="binding site" evidence="1">
    <location>
        <position position="900"/>
    </location>
    <ligand>
        <name>Zn(2+)</name>
        <dbReference type="ChEBI" id="CHEBI:29105"/>
    </ligand>
</feature>
<feature type="binding site" evidence="1">
    <location>
        <position position="917"/>
    </location>
    <ligand>
        <name>Zn(2+)</name>
        <dbReference type="ChEBI" id="CHEBI:29105"/>
    </ligand>
</feature>
<feature type="binding site" evidence="1">
    <location>
        <position position="920"/>
    </location>
    <ligand>
        <name>Zn(2+)</name>
        <dbReference type="ChEBI" id="CHEBI:29105"/>
    </ligand>
</feature>
<name>SYI_FRATO</name>